<sequence length="275" mass="30710">MISVAPKVNQANTSLKLDLDNLTTEQTALEIKDLDLYYGDKQALSKVNMNIPKGQVTAFIGPSGCGKSTLLRCINRMNDLVDICRIEGEILLHGQNIYDKSVDVAALRRNVGMVFQRPNPFPKSIYENVVYGLRLQGIKDKRKLDEVVEQSLRGAALWDEVKDRLHDSAFGLSGGQQQRLVIARSIAISPEVLLLDEPTSALDPISTLVIEELINDLKSKFTVVIVTHNMQQAARVSDQTAFMYMGELIEYSDTNTLFTTPNKKKTEDYITGRYG</sequence>
<accession>Q3ILC5</accession>
<comment type="function">
    <text evidence="1">Part of the ABC transporter complex PstSACB involved in phosphate import. Responsible for energy coupling to the transport system.</text>
</comment>
<comment type="catalytic activity">
    <reaction evidence="1">
        <text>phosphate(out) + ATP + H2O = ADP + 2 phosphate(in) + H(+)</text>
        <dbReference type="Rhea" id="RHEA:24440"/>
        <dbReference type="ChEBI" id="CHEBI:15377"/>
        <dbReference type="ChEBI" id="CHEBI:15378"/>
        <dbReference type="ChEBI" id="CHEBI:30616"/>
        <dbReference type="ChEBI" id="CHEBI:43474"/>
        <dbReference type="ChEBI" id="CHEBI:456216"/>
        <dbReference type="EC" id="7.3.2.1"/>
    </reaction>
</comment>
<comment type="subunit">
    <text evidence="1">The complex is composed of two ATP-binding proteins (PstB), two transmembrane proteins (PstC and PstA) and a solute-binding protein (PstS).</text>
</comment>
<comment type="subcellular location">
    <subcellularLocation>
        <location evidence="1">Cell inner membrane</location>
        <topology evidence="1">Peripheral membrane protein</topology>
    </subcellularLocation>
</comment>
<comment type="similarity">
    <text evidence="1">Belongs to the ABC transporter superfamily. Phosphate importer (TC 3.A.1.7) family.</text>
</comment>
<gene>
    <name evidence="1" type="primary">pstB</name>
    <name type="ordered locus">PSHAa0311</name>
</gene>
<protein>
    <recommendedName>
        <fullName evidence="1">Phosphate import ATP-binding protein PstB</fullName>
        <ecNumber evidence="1">7.3.2.1</ecNumber>
    </recommendedName>
    <alternativeName>
        <fullName evidence="1">ABC phosphate transporter</fullName>
    </alternativeName>
    <alternativeName>
        <fullName evidence="1">Phosphate-transporting ATPase</fullName>
    </alternativeName>
</protein>
<feature type="chain" id="PRO_0000272496" description="Phosphate import ATP-binding protein PstB">
    <location>
        <begin position="1"/>
        <end position="275"/>
    </location>
</feature>
<feature type="domain" description="ABC transporter" evidence="1">
    <location>
        <begin position="29"/>
        <end position="270"/>
    </location>
</feature>
<feature type="binding site" evidence="1">
    <location>
        <begin position="61"/>
        <end position="68"/>
    </location>
    <ligand>
        <name>ATP</name>
        <dbReference type="ChEBI" id="CHEBI:30616"/>
    </ligand>
</feature>
<keyword id="KW-0067">ATP-binding</keyword>
<keyword id="KW-0997">Cell inner membrane</keyword>
<keyword id="KW-1003">Cell membrane</keyword>
<keyword id="KW-0472">Membrane</keyword>
<keyword id="KW-0547">Nucleotide-binding</keyword>
<keyword id="KW-0592">Phosphate transport</keyword>
<keyword id="KW-1185">Reference proteome</keyword>
<keyword id="KW-1278">Translocase</keyword>
<keyword id="KW-0813">Transport</keyword>
<dbReference type="EC" id="7.3.2.1" evidence="1"/>
<dbReference type="EMBL" id="CR954246">
    <property type="protein sequence ID" value="CAI85410.1"/>
    <property type="molecule type" value="Genomic_DNA"/>
</dbReference>
<dbReference type="SMR" id="Q3ILC5"/>
<dbReference type="STRING" id="326442.PSHAa0311"/>
<dbReference type="KEGG" id="pha:PSHAa0311"/>
<dbReference type="eggNOG" id="COG1117">
    <property type="taxonomic scope" value="Bacteria"/>
</dbReference>
<dbReference type="HOGENOM" id="CLU_000604_1_22_6"/>
<dbReference type="BioCyc" id="PHAL326442:PSHA_RS01540-MONOMER"/>
<dbReference type="Proteomes" id="UP000006843">
    <property type="component" value="Chromosome I"/>
</dbReference>
<dbReference type="GO" id="GO:0005886">
    <property type="term" value="C:plasma membrane"/>
    <property type="evidence" value="ECO:0007669"/>
    <property type="project" value="UniProtKB-SubCell"/>
</dbReference>
<dbReference type="GO" id="GO:0005524">
    <property type="term" value="F:ATP binding"/>
    <property type="evidence" value="ECO:0007669"/>
    <property type="project" value="UniProtKB-KW"/>
</dbReference>
<dbReference type="GO" id="GO:0016887">
    <property type="term" value="F:ATP hydrolysis activity"/>
    <property type="evidence" value="ECO:0007669"/>
    <property type="project" value="InterPro"/>
</dbReference>
<dbReference type="GO" id="GO:0015415">
    <property type="term" value="F:ATPase-coupled phosphate ion transmembrane transporter activity"/>
    <property type="evidence" value="ECO:0007669"/>
    <property type="project" value="UniProtKB-EC"/>
</dbReference>
<dbReference type="GO" id="GO:0035435">
    <property type="term" value="P:phosphate ion transmembrane transport"/>
    <property type="evidence" value="ECO:0007669"/>
    <property type="project" value="InterPro"/>
</dbReference>
<dbReference type="CDD" id="cd03260">
    <property type="entry name" value="ABC_PstB_phosphate_transporter"/>
    <property type="match status" value="1"/>
</dbReference>
<dbReference type="FunFam" id="3.40.50.300:FF:000132">
    <property type="entry name" value="Phosphate import ATP-binding protein PstB"/>
    <property type="match status" value="1"/>
</dbReference>
<dbReference type="Gene3D" id="3.40.50.300">
    <property type="entry name" value="P-loop containing nucleotide triphosphate hydrolases"/>
    <property type="match status" value="1"/>
</dbReference>
<dbReference type="InterPro" id="IPR003593">
    <property type="entry name" value="AAA+_ATPase"/>
</dbReference>
<dbReference type="InterPro" id="IPR003439">
    <property type="entry name" value="ABC_transporter-like_ATP-bd"/>
</dbReference>
<dbReference type="InterPro" id="IPR017871">
    <property type="entry name" value="ABC_transporter-like_CS"/>
</dbReference>
<dbReference type="InterPro" id="IPR027417">
    <property type="entry name" value="P-loop_NTPase"/>
</dbReference>
<dbReference type="InterPro" id="IPR005670">
    <property type="entry name" value="PstB-like"/>
</dbReference>
<dbReference type="NCBIfam" id="TIGR00972">
    <property type="entry name" value="3a0107s01c2"/>
    <property type="match status" value="1"/>
</dbReference>
<dbReference type="PANTHER" id="PTHR43423">
    <property type="entry name" value="ABC TRANSPORTER I FAMILY MEMBER 17"/>
    <property type="match status" value="1"/>
</dbReference>
<dbReference type="PANTHER" id="PTHR43423:SF12">
    <property type="entry name" value="IRON EXPORT ATP-BINDING PROTEIN FETA-RELATED"/>
    <property type="match status" value="1"/>
</dbReference>
<dbReference type="Pfam" id="PF00005">
    <property type="entry name" value="ABC_tran"/>
    <property type="match status" value="1"/>
</dbReference>
<dbReference type="SMART" id="SM00382">
    <property type="entry name" value="AAA"/>
    <property type="match status" value="1"/>
</dbReference>
<dbReference type="SUPFAM" id="SSF52540">
    <property type="entry name" value="P-loop containing nucleoside triphosphate hydrolases"/>
    <property type="match status" value="1"/>
</dbReference>
<dbReference type="PROSITE" id="PS00211">
    <property type="entry name" value="ABC_TRANSPORTER_1"/>
    <property type="match status" value="1"/>
</dbReference>
<dbReference type="PROSITE" id="PS50893">
    <property type="entry name" value="ABC_TRANSPORTER_2"/>
    <property type="match status" value="1"/>
</dbReference>
<dbReference type="PROSITE" id="PS51238">
    <property type="entry name" value="PSTB"/>
    <property type="match status" value="1"/>
</dbReference>
<organism>
    <name type="scientific">Pseudoalteromonas translucida (strain TAC 125)</name>
    <dbReference type="NCBI Taxonomy" id="326442"/>
    <lineage>
        <taxon>Bacteria</taxon>
        <taxon>Pseudomonadati</taxon>
        <taxon>Pseudomonadota</taxon>
        <taxon>Gammaproteobacteria</taxon>
        <taxon>Alteromonadales</taxon>
        <taxon>Pseudoalteromonadaceae</taxon>
        <taxon>Pseudoalteromonas</taxon>
    </lineage>
</organism>
<evidence type="ECO:0000255" key="1">
    <source>
        <dbReference type="HAMAP-Rule" id="MF_01702"/>
    </source>
</evidence>
<reference key="1">
    <citation type="journal article" date="2005" name="Genome Res.">
        <title>Coping with cold: the genome of the versatile marine Antarctica bacterium Pseudoalteromonas haloplanktis TAC125.</title>
        <authorList>
            <person name="Medigue C."/>
            <person name="Krin E."/>
            <person name="Pascal G."/>
            <person name="Barbe V."/>
            <person name="Bernsel A."/>
            <person name="Bertin P.N."/>
            <person name="Cheung F."/>
            <person name="Cruveiller S."/>
            <person name="D'Amico S."/>
            <person name="Duilio A."/>
            <person name="Fang G."/>
            <person name="Feller G."/>
            <person name="Ho C."/>
            <person name="Mangenot S."/>
            <person name="Marino G."/>
            <person name="Nilsson J."/>
            <person name="Parrilli E."/>
            <person name="Rocha E.P.C."/>
            <person name="Rouy Z."/>
            <person name="Sekowska A."/>
            <person name="Tutino M.L."/>
            <person name="Vallenet D."/>
            <person name="von Heijne G."/>
            <person name="Danchin A."/>
        </authorList>
    </citation>
    <scope>NUCLEOTIDE SEQUENCE [LARGE SCALE GENOMIC DNA]</scope>
    <source>
        <strain>TAC 125</strain>
    </source>
</reference>
<proteinExistence type="inferred from homology"/>
<name>PSTB_PSET1</name>